<sequence>MIKKIAVLTSGGDAPGMNAAIRGVVRSALFEGLEVFGVYDGYYGLYHNKIKQLNRYSVSDVITRGGTFLGSARFPEFKNPEVRAKCAEILRSHGIDALVVIGGDGSYTGAKLLTEEHGIQCIGLPGTIDNDAPGTDYTIGYQTALETAVDAIDRLRDTSSSHQRISIVEIMGRHCSDLTINAALAGGCEYIVASEVEFDQEELIQQIERSIANGKRHAIIAITELITDVHELAKRIEERVHHETRATVLGHVQRGGSPCAFDRILASRMGVYAVDLLLQGKGGYCVGIQNEQLVHHDIIDAINNMRRSFKAELLDMNERLF</sequence>
<keyword id="KW-0021">Allosteric enzyme</keyword>
<keyword id="KW-0067">ATP-binding</keyword>
<keyword id="KW-0963">Cytoplasm</keyword>
<keyword id="KW-0324">Glycolysis</keyword>
<keyword id="KW-0418">Kinase</keyword>
<keyword id="KW-0460">Magnesium</keyword>
<keyword id="KW-0479">Metal-binding</keyword>
<keyword id="KW-0547">Nucleotide-binding</keyword>
<keyword id="KW-0808">Transferase</keyword>
<name>PFKA_MANSM</name>
<gene>
    <name evidence="1" type="primary">pfkA</name>
    <name type="ordered locus">MS0377</name>
</gene>
<protein>
    <recommendedName>
        <fullName evidence="1">ATP-dependent 6-phosphofructokinase</fullName>
        <shortName evidence="1">ATP-PFK</shortName>
        <shortName evidence="1">Phosphofructokinase</shortName>
        <ecNumber evidence="1">2.7.1.11</ecNumber>
    </recommendedName>
    <alternativeName>
        <fullName evidence="1">Phosphohexokinase</fullName>
    </alternativeName>
</protein>
<evidence type="ECO:0000255" key="1">
    <source>
        <dbReference type="HAMAP-Rule" id="MF_00339"/>
    </source>
</evidence>
<comment type="function">
    <text evidence="1">Catalyzes the phosphorylation of D-fructose 6-phosphate to fructose 1,6-bisphosphate by ATP, the first committing step of glycolysis.</text>
</comment>
<comment type="catalytic activity">
    <reaction evidence="1">
        <text>beta-D-fructose 6-phosphate + ATP = beta-D-fructose 1,6-bisphosphate + ADP + H(+)</text>
        <dbReference type="Rhea" id="RHEA:16109"/>
        <dbReference type="ChEBI" id="CHEBI:15378"/>
        <dbReference type="ChEBI" id="CHEBI:30616"/>
        <dbReference type="ChEBI" id="CHEBI:32966"/>
        <dbReference type="ChEBI" id="CHEBI:57634"/>
        <dbReference type="ChEBI" id="CHEBI:456216"/>
        <dbReference type="EC" id="2.7.1.11"/>
    </reaction>
</comment>
<comment type="cofactor">
    <cofactor evidence="1">
        <name>Mg(2+)</name>
        <dbReference type="ChEBI" id="CHEBI:18420"/>
    </cofactor>
</comment>
<comment type="activity regulation">
    <text evidence="1">Allosterically activated by ADP and other diphosphonucleosides, and allosterically inhibited by phosphoenolpyruvate.</text>
</comment>
<comment type="pathway">
    <text evidence="1">Carbohydrate degradation; glycolysis; D-glyceraldehyde 3-phosphate and glycerone phosphate from D-glucose: step 3/4.</text>
</comment>
<comment type="subunit">
    <text evidence="1">Homotetramer.</text>
</comment>
<comment type="subcellular location">
    <subcellularLocation>
        <location evidence="1">Cytoplasm</location>
    </subcellularLocation>
</comment>
<comment type="similarity">
    <text evidence="1">Belongs to the phosphofructokinase type A (PFKA) family. ATP-dependent PFK group I subfamily. Prokaryotic clade 'B1' sub-subfamily.</text>
</comment>
<feature type="chain" id="PRO_1000059777" description="ATP-dependent 6-phosphofructokinase">
    <location>
        <begin position="1"/>
        <end position="321"/>
    </location>
</feature>
<feature type="active site" description="Proton acceptor" evidence="1">
    <location>
        <position position="129"/>
    </location>
</feature>
<feature type="binding site" evidence="1">
    <location>
        <position position="12"/>
    </location>
    <ligand>
        <name>ATP</name>
        <dbReference type="ChEBI" id="CHEBI:30616"/>
    </ligand>
</feature>
<feature type="binding site" evidence="1">
    <location>
        <begin position="22"/>
        <end position="26"/>
    </location>
    <ligand>
        <name>ADP</name>
        <dbReference type="ChEBI" id="CHEBI:456216"/>
        <note>allosteric activator; ligand shared between dimeric partners</note>
    </ligand>
</feature>
<feature type="binding site" evidence="1">
    <location>
        <begin position="55"/>
        <end position="60"/>
    </location>
    <ligand>
        <name>ADP</name>
        <dbReference type="ChEBI" id="CHEBI:456216"/>
        <note>allosteric activator; ligand shared between dimeric partners</note>
    </ligand>
</feature>
<feature type="binding site" evidence="1">
    <location>
        <begin position="73"/>
        <end position="74"/>
    </location>
    <ligand>
        <name>ATP</name>
        <dbReference type="ChEBI" id="CHEBI:30616"/>
    </ligand>
</feature>
<feature type="binding site" evidence="1">
    <location>
        <begin position="103"/>
        <end position="106"/>
    </location>
    <ligand>
        <name>ATP</name>
        <dbReference type="ChEBI" id="CHEBI:30616"/>
    </ligand>
</feature>
<feature type="binding site" evidence="1">
    <location>
        <position position="104"/>
    </location>
    <ligand>
        <name>Mg(2+)</name>
        <dbReference type="ChEBI" id="CHEBI:18420"/>
        <note>catalytic</note>
    </ligand>
</feature>
<feature type="binding site" description="in other chain" evidence="1">
    <location>
        <begin position="127"/>
        <end position="129"/>
    </location>
    <ligand>
        <name>substrate</name>
        <note>ligand shared between dimeric partners</note>
    </ligand>
</feature>
<feature type="binding site" description="in other chain" evidence="1">
    <location>
        <position position="156"/>
    </location>
    <ligand>
        <name>ADP</name>
        <dbReference type="ChEBI" id="CHEBI:456216"/>
        <note>allosteric activator; ligand shared between dimeric partners</note>
    </ligand>
</feature>
<feature type="binding site" evidence="1">
    <location>
        <position position="164"/>
    </location>
    <ligand>
        <name>substrate</name>
        <note>ligand shared between dimeric partners</note>
    </ligand>
</feature>
<feature type="binding site" description="in other chain" evidence="1">
    <location>
        <begin position="171"/>
        <end position="173"/>
    </location>
    <ligand>
        <name>substrate</name>
        <note>ligand shared between dimeric partners</note>
    </ligand>
</feature>
<feature type="binding site" description="in other chain" evidence="1">
    <location>
        <begin position="187"/>
        <end position="189"/>
    </location>
    <ligand>
        <name>ADP</name>
        <dbReference type="ChEBI" id="CHEBI:456216"/>
        <note>allosteric activator; ligand shared between dimeric partners</note>
    </ligand>
</feature>
<feature type="binding site" description="in other chain" evidence="1">
    <location>
        <begin position="215"/>
        <end position="217"/>
    </location>
    <ligand>
        <name>ADP</name>
        <dbReference type="ChEBI" id="CHEBI:456216"/>
        <note>allosteric activator; ligand shared between dimeric partners</note>
    </ligand>
</feature>
<feature type="binding site" description="in other chain" evidence="1">
    <location>
        <position position="224"/>
    </location>
    <ligand>
        <name>substrate</name>
        <note>ligand shared between dimeric partners</note>
    </ligand>
</feature>
<feature type="binding site" evidence="1">
    <location>
        <position position="245"/>
    </location>
    <ligand>
        <name>substrate</name>
        <note>ligand shared between dimeric partners</note>
    </ligand>
</feature>
<feature type="binding site" description="in other chain" evidence="1">
    <location>
        <begin position="251"/>
        <end position="254"/>
    </location>
    <ligand>
        <name>substrate</name>
        <note>ligand shared between dimeric partners</note>
    </ligand>
</feature>
<reference key="1">
    <citation type="journal article" date="2004" name="Nat. Biotechnol.">
        <title>The genome sequence of the capnophilic rumen bacterium Mannheimia succiniciproducens.</title>
        <authorList>
            <person name="Hong S.H."/>
            <person name="Kim J.S."/>
            <person name="Lee S.Y."/>
            <person name="In Y.H."/>
            <person name="Choi S.S."/>
            <person name="Rih J.-K."/>
            <person name="Kim C.H."/>
            <person name="Jeong H."/>
            <person name="Hur C.G."/>
            <person name="Kim J.J."/>
        </authorList>
    </citation>
    <scope>NUCLEOTIDE SEQUENCE [LARGE SCALE GENOMIC DNA]</scope>
    <source>
        <strain>KCTC 0769BP / MBEL55E</strain>
    </source>
</reference>
<accession>Q65VM6</accession>
<proteinExistence type="inferred from homology"/>
<organism>
    <name type="scientific">Mannheimia succiniciproducens (strain KCTC 0769BP / MBEL55E)</name>
    <dbReference type="NCBI Taxonomy" id="221988"/>
    <lineage>
        <taxon>Bacteria</taxon>
        <taxon>Pseudomonadati</taxon>
        <taxon>Pseudomonadota</taxon>
        <taxon>Gammaproteobacteria</taxon>
        <taxon>Pasteurellales</taxon>
        <taxon>Pasteurellaceae</taxon>
        <taxon>Basfia</taxon>
    </lineage>
</organism>
<dbReference type="EC" id="2.7.1.11" evidence="1"/>
<dbReference type="EMBL" id="AE016827">
    <property type="protein sequence ID" value="AAU36984.1"/>
    <property type="molecule type" value="Genomic_DNA"/>
</dbReference>
<dbReference type="RefSeq" id="WP_011199559.1">
    <property type="nucleotide sequence ID" value="NC_006300.1"/>
</dbReference>
<dbReference type="SMR" id="Q65VM6"/>
<dbReference type="STRING" id="221988.MS0377"/>
<dbReference type="KEGG" id="msu:MS0377"/>
<dbReference type="eggNOG" id="COG0205">
    <property type="taxonomic scope" value="Bacteria"/>
</dbReference>
<dbReference type="HOGENOM" id="CLU_020655_0_1_6"/>
<dbReference type="OrthoDB" id="9802503at2"/>
<dbReference type="UniPathway" id="UPA00109">
    <property type="reaction ID" value="UER00182"/>
</dbReference>
<dbReference type="Proteomes" id="UP000000607">
    <property type="component" value="Chromosome"/>
</dbReference>
<dbReference type="GO" id="GO:0005945">
    <property type="term" value="C:6-phosphofructokinase complex"/>
    <property type="evidence" value="ECO:0007669"/>
    <property type="project" value="TreeGrafter"/>
</dbReference>
<dbReference type="GO" id="GO:0003872">
    <property type="term" value="F:6-phosphofructokinase activity"/>
    <property type="evidence" value="ECO:0007669"/>
    <property type="project" value="UniProtKB-UniRule"/>
</dbReference>
<dbReference type="GO" id="GO:0016208">
    <property type="term" value="F:AMP binding"/>
    <property type="evidence" value="ECO:0007669"/>
    <property type="project" value="TreeGrafter"/>
</dbReference>
<dbReference type="GO" id="GO:0005524">
    <property type="term" value="F:ATP binding"/>
    <property type="evidence" value="ECO:0007669"/>
    <property type="project" value="UniProtKB-KW"/>
</dbReference>
<dbReference type="GO" id="GO:0070095">
    <property type="term" value="F:fructose-6-phosphate binding"/>
    <property type="evidence" value="ECO:0007669"/>
    <property type="project" value="TreeGrafter"/>
</dbReference>
<dbReference type="GO" id="GO:0042802">
    <property type="term" value="F:identical protein binding"/>
    <property type="evidence" value="ECO:0007669"/>
    <property type="project" value="TreeGrafter"/>
</dbReference>
<dbReference type="GO" id="GO:0046872">
    <property type="term" value="F:metal ion binding"/>
    <property type="evidence" value="ECO:0007669"/>
    <property type="project" value="UniProtKB-KW"/>
</dbReference>
<dbReference type="GO" id="GO:0048029">
    <property type="term" value="F:monosaccharide binding"/>
    <property type="evidence" value="ECO:0007669"/>
    <property type="project" value="TreeGrafter"/>
</dbReference>
<dbReference type="GO" id="GO:0061621">
    <property type="term" value="P:canonical glycolysis"/>
    <property type="evidence" value="ECO:0007669"/>
    <property type="project" value="TreeGrafter"/>
</dbReference>
<dbReference type="GO" id="GO:0030388">
    <property type="term" value="P:fructose 1,6-bisphosphate metabolic process"/>
    <property type="evidence" value="ECO:0007669"/>
    <property type="project" value="TreeGrafter"/>
</dbReference>
<dbReference type="GO" id="GO:0006002">
    <property type="term" value="P:fructose 6-phosphate metabolic process"/>
    <property type="evidence" value="ECO:0007669"/>
    <property type="project" value="InterPro"/>
</dbReference>
<dbReference type="CDD" id="cd00763">
    <property type="entry name" value="Bacterial_PFK"/>
    <property type="match status" value="1"/>
</dbReference>
<dbReference type="FunFam" id="3.40.50.450:FF:000001">
    <property type="entry name" value="ATP-dependent 6-phosphofructokinase"/>
    <property type="match status" value="1"/>
</dbReference>
<dbReference type="FunFam" id="3.40.50.460:FF:000002">
    <property type="entry name" value="ATP-dependent 6-phosphofructokinase"/>
    <property type="match status" value="1"/>
</dbReference>
<dbReference type="Gene3D" id="3.40.50.450">
    <property type="match status" value="1"/>
</dbReference>
<dbReference type="Gene3D" id="3.40.50.460">
    <property type="entry name" value="Phosphofructokinase domain"/>
    <property type="match status" value="1"/>
</dbReference>
<dbReference type="HAMAP" id="MF_00339">
    <property type="entry name" value="Phosphofructokinase_I_B1"/>
    <property type="match status" value="1"/>
</dbReference>
<dbReference type="InterPro" id="IPR022953">
    <property type="entry name" value="ATP_PFK"/>
</dbReference>
<dbReference type="InterPro" id="IPR012003">
    <property type="entry name" value="ATP_PFK_prok-type"/>
</dbReference>
<dbReference type="InterPro" id="IPR012828">
    <property type="entry name" value="PFKA_ATP_prok"/>
</dbReference>
<dbReference type="InterPro" id="IPR015912">
    <property type="entry name" value="Phosphofructokinase_CS"/>
</dbReference>
<dbReference type="InterPro" id="IPR000023">
    <property type="entry name" value="Phosphofructokinase_dom"/>
</dbReference>
<dbReference type="InterPro" id="IPR035966">
    <property type="entry name" value="PKF_sf"/>
</dbReference>
<dbReference type="NCBIfam" id="TIGR02482">
    <property type="entry name" value="PFKA_ATP"/>
    <property type="match status" value="1"/>
</dbReference>
<dbReference type="NCBIfam" id="NF002872">
    <property type="entry name" value="PRK03202.1"/>
    <property type="match status" value="1"/>
</dbReference>
<dbReference type="PANTHER" id="PTHR13697:SF4">
    <property type="entry name" value="ATP-DEPENDENT 6-PHOSPHOFRUCTOKINASE"/>
    <property type="match status" value="1"/>
</dbReference>
<dbReference type="PANTHER" id="PTHR13697">
    <property type="entry name" value="PHOSPHOFRUCTOKINASE"/>
    <property type="match status" value="1"/>
</dbReference>
<dbReference type="Pfam" id="PF00365">
    <property type="entry name" value="PFK"/>
    <property type="match status" value="1"/>
</dbReference>
<dbReference type="PIRSF" id="PIRSF000532">
    <property type="entry name" value="ATP_PFK_prok"/>
    <property type="match status" value="1"/>
</dbReference>
<dbReference type="PRINTS" id="PR00476">
    <property type="entry name" value="PHFRCTKINASE"/>
</dbReference>
<dbReference type="SUPFAM" id="SSF53784">
    <property type="entry name" value="Phosphofructokinase"/>
    <property type="match status" value="1"/>
</dbReference>
<dbReference type="PROSITE" id="PS00433">
    <property type="entry name" value="PHOSPHOFRUCTOKINASE"/>
    <property type="match status" value="1"/>
</dbReference>